<protein>
    <recommendedName>
        <fullName evidence="1">Large ribosomal subunit protein uL16c</fullName>
    </recommendedName>
    <alternativeName>
        <fullName evidence="3">50S ribosomal protein L16, chloroplastic</fullName>
    </alternativeName>
</protein>
<evidence type="ECO:0000255" key="1">
    <source>
        <dbReference type="HAMAP-Rule" id="MF_01342"/>
    </source>
</evidence>
<evidence type="ECO:0000256" key="2">
    <source>
        <dbReference type="SAM" id="MobiDB-lite"/>
    </source>
</evidence>
<evidence type="ECO:0000305" key="3"/>
<name>RK16_AGRST</name>
<dbReference type="EMBL" id="EF115543">
    <property type="protein sequence ID" value="ABK79617.1"/>
    <property type="molecule type" value="Genomic_DNA"/>
</dbReference>
<dbReference type="RefSeq" id="YP_874774.1">
    <property type="nucleotide sequence ID" value="NC_008591.1"/>
</dbReference>
<dbReference type="SMR" id="A1EA46"/>
<dbReference type="GeneID" id="4524947"/>
<dbReference type="GO" id="GO:0009507">
    <property type="term" value="C:chloroplast"/>
    <property type="evidence" value="ECO:0007669"/>
    <property type="project" value="UniProtKB-SubCell"/>
</dbReference>
<dbReference type="GO" id="GO:0005762">
    <property type="term" value="C:mitochondrial large ribosomal subunit"/>
    <property type="evidence" value="ECO:0007669"/>
    <property type="project" value="TreeGrafter"/>
</dbReference>
<dbReference type="GO" id="GO:0019843">
    <property type="term" value="F:rRNA binding"/>
    <property type="evidence" value="ECO:0007669"/>
    <property type="project" value="InterPro"/>
</dbReference>
<dbReference type="GO" id="GO:0003735">
    <property type="term" value="F:structural constituent of ribosome"/>
    <property type="evidence" value="ECO:0007669"/>
    <property type="project" value="InterPro"/>
</dbReference>
<dbReference type="GO" id="GO:0032543">
    <property type="term" value="P:mitochondrial translation"/>
    <property type="evidence" value="ECO:0007669"/>
    <property type="project" value="TreeGrafter"/>
</dbReference>
<dbReference type="CDD" id="cd01433">
    <property type="entry name" value="Ribosomal_L16_L10e"/>
    <property type="match status" value="1"/>
</dbReference>
<dbReference type="FunFam" id="3.90.1170.10:FF:000001">
    <property type="entry name" value="50S ribosomal protein L16"/>
    <property type="match status" value="1"/>
</dbReference>
<dbReference type="Gene3D" id="3.90.1170.10">
    <property type="entry name" value="Ribosomal protein L10e/L16"/>
    <property type="match status" value="1"/>
</dbReference>
<dbReference type="HAMAP" id="MF_01342">
    <property type="entry name" value="Ribosomal_uL16"/>
    <property type="match status" value="1"/>
</dbReference>
<dbReference type="InterPro" id="IPR047873">
    <property type="entry name" value="Ribosomal_uL16"/>
</dbReference>
<dbReference type="InterPro" id="IPR000114">
    <property type="entry name" value="Ribosomal_uL16_bact-type"/>
</dbReference>
<dbReference type="InterPro" id="IPR020798">
    <property type="entry name" value="Ribosomal_uL16_CS"/>
</dbReference>
<dbReference type="InterPro" id="IPR016180">
    <property type="entry name" value="Ribosomal_uL16_dom"/>
</dbReference>
<dbReference type="InterPro" id="IPR036920">
    <property type="entry name" value="Ribosomal_uL16_sf"/>
</dbReference>
<dbReference type="NCBIfam" id="TIGR01164">
    <property type="entry name" value="rplP_bact"/>
    <property type="match status" value="1"/>
</dbReference>
<dbReference type="PANTHER" id="PTHR12220">
    <property type="entry name" value="50S/60S RIBOSOMAL PROTEIN L16"/>
    <property type="match status" value="1"/>
</dbReference>
<dbReference type="PANTHER" id="PTHR12220:SF13">
    <property type="entry name" value="LARGE RIBOSOMAL SUBUNIT PROTEIN UL16M"/>
    <property type="match status" value="1"/>
</dbReference>
<dbReference type="Pfam" id="PF00252">
    <property type="entry name" value="Ribosomal_L16"/>
    <property type="match status" value="1"/>
</dbReference>
<dbReference type="PRINTS" id="PR00060">
    <property type="entry name" value="RIBOSOMALL16"/>
</dbReference>
<dbReference type="SUPFAM" id="SSF54686">
    <property type="entry name" value="Ribosomal protein L16p/L10e"/>
    <property type="match status" value="1"/>
</dbReference>
<dbReference type="PROSITE" id="PS00586">
    <property type="entry name" value="RIBOSOMAL_L16_1"/>
    <property type="match status" value="1"/>
</dbReference>
<dbReference type="PROSITE" id="PS00701">
    <property type="entry name" value="RIBOSOMAL_L16_2"/>
    <property type="match status" value="1"/>
</dbReference>
<comment type="subunit">
    <text evidence="1">Part of the 50S ribosomal subunit.</text>
</comment>
<comment type="subcellular location">
    <subcellularLocation>
        <location>Plastid</location>
        <location>Chloroplast</location>
    </subcellularLocation>
</comment>
<comment type="similarity">
    <text evidence="1">Belongs to the universal ribosomal protein uL16 family.</text>
</comment>
<reference key="1">
    <citation type="journal article" date="2007" name="Theor. Appl. Genet.">
        <title>Complete chloroplast genome sequences of Hordeum vulgare, Sorghum bicolor and Agrostis stolonifera, and comparative analyses with other grass genomes.</title>
        <authorList>
            <person name="Saski C."/>
            <person name="Lee S.-B."/>
            <person name="Fjellheim S."/>
            <person name="Guda C."/>
            <person name="Jansen R.K."/>
            <person name="Luo H."/>
            <person name="Tomkins J."/>
            <person name="Rognli O.A."/>
            <person name="Daniell H."/>
            <person name="Clarke J.L."/>
        </authorList>
    </citation>
    <scope>NUCLEOTIDE SEQUENCE [LARGE SCALE GENOMIC DNA]</scope>
    <source>
        <strain>cv. Penn A-4</strain>
    </source>
</reference>
<feature type="chain" id="PRO_0000276378" description="Large ribosomal subunit protein uL16c">
    <location>
        <begin position="1"/>
        <end position="136"/>
    </location>
</feature>
<feature type="region of interest" description="Disordered" evidence="2">
    <location>
        <begin position="1"/>
        <end position="20"/>
    </location>
</feature>
<organism>
    <name type="scientific">Agrostis stolonifera</name>
    <name type="common">Creeping bentgrass</name>
    <dbReference type="NCBI Taxonomy" id="63632"/>
    <lineage>
        <taxon>Eukaryota</taxon>
        <taxon>Viridiplantae</taxon>
        <taxon>Streptophyta</taxon>
        <taxon>Embryophyta</taxon>
        <taxon>Tracheophyta</taxon>
        <taxon>Spermatophyta</taxon>
        <taxon>Magnoliopsida</taxon>
        <taxon>Liliopsida</taxon>
        <taxon>Poales</taxon>
        <taxon>Poaceae</taxon>
        <taxon>BOP clade</taxon>
        <taxon>Pooideae</taxon>
        <taxon>Poodae</taxon>
        <taxon>Poeae</taxon>
        <taxon>Poeae Chloroplast Group 1 (Aveneae type)</taxon>
        <taxon>Agrostidodinae</taxon>
        <taxon>Agrostidinae</taxon>
        <taxon>Agrostis</taxon>
    </lineage>
</organism>
<keyword id="KW-0150">Chloroplast</keyword>
<keyword id="KW-0934">Plastid</keyword>
<keyword id="KW-0687">Ribonucleoprotein</keyword>
<keyword id="KW-0689">Ribosomal protein</keyword>
<sequence>MLSPKRTRFRKQHRGRMKGKSCRGNRICFGRYALQALEPAWITARQIEAGRRAITRYARRGGKIWVRIFPDKPVTLRPTETRMGSGKGSPEYWVAVVKPGRILYEMGGVSETVARAAISIAASKMPIRSQFIRLEI</sequence>
<accession>A1EA46</accession>
<gene>
    <name evidence="1" type="primary">rpl16</name>
</gene>
<proteinExistence type="inferred from homology"/>
<geneLocation type="chloroplast"/>